<feature type="chain" id="PRO_0000064322" description="Di-/tripeptide transporter">
    <location>
        <begin position="1"/>
        <end position="497"/>
    </location>
</feature>
<feature type="topological domain" description="Cytoplasmic" evidence="1">
    <location>
        <begin position="1"/>
        <end position="36"/>
    </location>
</feature>
<feature type="transmembrane region" description="Helical" evidence="1">
    <location>
        <begin position="37"/>
        <end position="55"/>
    </location>
</feature>
<feature type="topological domain" description="Extracellular" evidence="1">
    <location>
        <begin position="56"/>
        <end position="64"/>
    </location>
</feature>
<feature type="transmembrane region" description="Helical" evidence="1">
    <location>
        <begin position="65"/>
        <end position="83"/>
    </location>
</feature>
<feature type="topological domain" description="Cytoplasmic" evidence="1">
    <location>
        <begin position="84"/>
        <end position="92"/>
    </location>
</feature>
<feature type="transmembrane region" description="Helical" evidence="1">
    <location>
        <begin position="93"/>
        <end position="111"/>
    </location>
</feature>
<feature type="topological domain" description="Extracellular" evidence="1">
    <location>
        <begin position="112"/>
        <end position="115"/>
    </location>
</feature>
<feature type="transmembrane region" description="Helical" evidence="1">
    <location>
        <begin position="116"/>
        <end position="134"/>
    </location>
</feature>
<feature type="topological domain" description="Cytoplasmic" evidence="1">
    <location>
        <begin position="135"/>
        <end position="154"/>
    </location>
</feature>
<feature type="transmembrane region" description="Helical" evidence="1">
    <location>
        <begin position="155"/>
        <end position="173"/>
    </location>
</feature>
<feature type="topological domain" description="Extracellular" evidence="1">
    <location>
        <begin position="174"/>
        <end position="181"/>
    </location>
</feature>
<feature type="transmembrane region" description="Helical" evidence="1">
    <location>
        <begin position="182"/>
        <end position="200"/>
    </location>
</feature>
<feature type="topological domain" description="Cytoplasmic" evidence="1">
    <location>
        <begin position="201"/>
        <end position="224"/>
    </location>
</feature>
<feature type="transmembrane region" description="Helical" evidence="1">
    <location>
        <begin position="225"/>
        <end position="243"/>
    </location>
</feature>
<feature type="topological domain" description="Extracellular" evidence="1">
    <location>
        <begin position="244"/>
        <end position="254"/>
    </location>
</feature>
<feature type="transmembrane region" description="Helical" evidence="1">
    <location>
        <begin position="255"/>
        <end position="273"/>
    </location>
</feature>
<feature type="topological domain" description="Cytoplasmic" evidence="1">
    <location>
        <begin position="274"/>
        <end position="293"/>
    </location>
</feature>
<feature type="transmembrane region" description="Helical" evidence="1">
    <location>
        <begin position="294"/>
        <end position="312"/>
    </location>
</feature>
<feature type="topological domain" description="Extracellular" evidence="1">
    <location>
        <begin position="313"/>
        <end position="335"/>
    </location>
</feature>
<feature type="transmembrane region" description="Helical" evidence="1">
    <location>
        <begin position="336"/>
        <end position="354"/>
    </location>
</feature>
<feature type="topological domain" description="Cytoplasmic" evidence="1">
    <location>
        <begin position="355"/>
        <end position="372"/>
    </location>
</feature>
<feature type="transmembrane region" description="Helical" evidence="1">
    <location>
        <begin position="373"/>
        <end position="391"/>
    </location>
</feature>
<feature type="topological domain" description="Extracellular" evidence="1">
    <location>
        <begin position="392"/>
        <end position="425"/>
    </location>
</feature>
<feature type="transmembrane region" description="Helical" evidence="1">
    <location>
        <begin position="426"/>
        <end position="444"/>
    </location>
</feature>
<feature type="topological domain" description="Cytoplasmic" evidence="1">
    <location>
        <begin position="445"/>
        <end position="497"/>
    </location>
</feature>
<name>DTPT_LACLA</name>
<sequence>MQNLNKTEKTFFGQPRGLLTLFQTEFWERFSYYGMRAILVYYLYALTTADNAGLGLPKAQAMAIVSIYGALVYLSTIVGGWVADRLLGASRTIFLGGILITLGHIALATPFGLSSLFVALFLIILGTGMLKPNISNMVGHLYSKDDSRRDTGFNIFVVGINMGSLIAPLIVGTVGQGVNYHLGFSLAAIGMIFALFAYWYGRLRHFPEIGREPSNPMDSKARRNFLITLTIVVIVAIIGFFLLYQASPANFINNFINVLSIIGIVVPIIYFVMMFTSKKVESDERRKLTAYIPLFLSAIVFWAIEEQSSTIIAVWGESRSNLDPTWFGITFHIDPSWYQLLNPLFIVLLSPIFVRLWNKLGERQPSTIVKFGLGLMLTGISYLIMTLPGLLNGTSGRASALWLVLMFAVQMAGELLVSPVGLSVSTKLAPVAFQSQMMAMWFLADSTSQAINAQITPLFKAATEVHFFAITGIIGIIVGIILLIVKKPILKLMGDVR</sequence>
<dbReference type="EMBL" id="AE005176">
    <property type="protein sequence ID" value="AAK04800.1"/>
    <property type="molecule type" value="Genomic_DNA"/>
</dbReference>
<dbReference type="PIR" id="F86712">
    <property type="entry name" value="F86712"/>
</dbReference>
<dbReference type="RefSeq" id="NP_266858.1">
    <property type="nucleotide sequence ID" value="NC_002662.1"/>
</dbReference>
<dbReference type="RefSeq" id="WP_010905519.1">
    <property type="nucleotide sequence ID" value="NC_002662.1"/>
</dbReference>
<dbReference type="SMR" id="P0C2U2"/>
<dbReference type="TCDB" id="2.A.17.1.1">
    <property type="family name" value="the proton-dependent oligopeptide transporter (pot/ptr) family"/>
</dbReference>
<dbReference type="PaxDb" id="272623-L104437"/>
<dbReference type="EnsemblBacteria" id="AAK04800">
    <property type="protein sequence ID" value="AAK04800"/>
    <property type="gene ID" value="L104437"/>
</dbReference>
<dbReference type="KEGG" id="lla:L104437"/>
<dbReference type="PATRIC" id="fig|272623.7.peg.753"/>
<dbReference type="eggNOG" id="COG3104">
    <property type="taxonomic scope" value="Bacteria"/>
</dbReference>
<dbReference type="HOGENOM" id="CLU_004790_0_1_9"/>
<dbReference type="OrthoDB" id="9772725at2"/>
<dbReference type="Proteomes" id="UP000002196">
    <property type="component" value="Chromosome"/>
</dbReference>
<dbReference type="GO" id="GO:0005886">
    <property type="term" value="C:plasma membrane"/>
    <property type="evidence" value="ECO:0007669"/>
    <property type="project" value="UniProtKB-SubCell"/>
</dbReference>
<dbReference type="GO" id="GO:1904680">
    <property type="term" value="F:peptide transmembrane transporter activity"/>
    <property type="evidence" value="ECO:0007669"/>
    <property type="project" value="InterPro"/>
</dbReference>
<dbReference type="GO" id="GO:0006857">
    <property type="term" value="P:oligopeptide transport"/>
    <property type="evidence" value="ECO:0007669"/>
    <property type="project" value="InterPro"/>
</dbReference>
<dbReference type="GO" id="GO:0015031">
    <property type="term" value="P:protein transport"/>
    <property type="evidence" value="ECO:0007669"/>
    <property type="project" value="UniProtKB-KW"/>
</dbReference>
<dbReference type="CDD" id="cd17346">
    <property type="entry name" value="MFS_DtpA_like"/>
    <property type="match status" value="1"/>
</dbReference>
<dbReference type="FunFam" id="1.20.1250.20:FF:000017">
    <property type="entry name" value="Dipeptide and tripeptide permease A"/>
    <property type="match status" value="1"/>
</dbReference>
<dbReference type="Gene3D" id="1.20.1250.20">
    <property type="entry name" value="MFS general substrate transporter like domains"/>
    <property type="match status" value="1"/>
</dbReference>
<dbReference type="InterPro" id="IPR005279">
    <property type="entry name" value="Dipep/tripep_permease"/>
</dbReference>
<dbReference type="InterPro" id="IPR020846">
    <property type="entry name" value="MFS_dom"/>
</dbReference>
<dbReference type="InterPro" id="IPR036259">
    <property type="entry name" value="MFS_trans_sf"/>
</dbReference>
<dbReference type="InterPro" id="IPR050171">
    <property type="entry name" value="MFS_Transporters"/>
</dbReference>
<dbReference type="InterPro" id="IPR000109">
    <property type="entry name" value="POT_fam"/>
</dbReference>
<dbReference type="InterPro" id="IPR018456">
    <property type="entry name" value="PTR2_symporter_CS"/>
</dbReference>
<dbReference type="NCBIfam" id="TIGR00924">
    <property type="entry name" value="yjdL_sub1_fam"/>
    <property type="match status" value="1"/>
</dbReference>
<dbReference type="PANTHER" id="PTHR23517:SF15">
    <property type="entry name" value="PROTON-DEPENDENT OLIGOPEPTIDE FAMILY TRANSPORT PROTEIN"/>
    <property type="match status" value="1"/>
</dbReference>
<dbReference type="PANTHER" id="PTHR23517">
    <property type="entry name" value="RESISTANCE PROTEIN MDTM, PUTATIVE-RELATED-RELATED"/>
    <property type="match status" value="1"/>
</dbReference>
<dbReference type="Pfam" id="PF00854">
    <property type="entry name" value="PTR2"/>
    <property type="match status" value="1"/>
</dbReference>
<dbReference type="SUPFAM" id="SSF103473">
    <property type="entry name" value="MFS general substrate transporter"/>
    <property type="match status" value="2"/>
</dbReference>
<dbReference type="PROSITE" id="PS50850">
    <property type="entry name" value="MFS"/>
    <property type="match status" value="1"/>
</dbReference>
<dbReference type="PROSITE" id="PS01022">
    <property type="entry name" value="PTR2_1"/>
    <property type="match status" value="1"/>
</dbReference>
<dbReference type="PROSITE" id="PS01023">
    <property type="entry name" value="PTR2_2"/>
    <property type="match status" value="1"/>
</dbReference>
<organism>
    <name type="scientific">Lactococcus lactis subsp. lactis (strain IL1403)</name>
    <name type="common">Streptococcus lactis</name>
    <dbReference type="NCBI Taxonomy" id="272623"/>
    <lineage>
        <taxon>Bacteria</taxon>
        <taxon>Bacillati</taxon>
        <taxon>Bacillota</taxon>
        <taxon>Bacilli</taxon>
        <taxon>Lactobacillales</taxon>
        <taxon>Streptococcaceae</taxon>
        <taxon>Lactococcus</taxon>
    </lineage>
</organism>
<keyword id="KW-1003">Cell membrane</keyword>
<keyword id="KW-0472">Membrane</keyword>
<keyword id="KW-0571">Peptide transport</keyword>
<keyword id="KW-0653">Protein transport</keyword>
<keyword id="KW-1185">Reference proteome</keyword>
<keyword id="KW-0812">Transmembrane</keyword>
<keyword id="KW-1133">Transmembrane helix</keyword>
<keyword id="KW-0813">Transport</keyword>
<accession>P0C2U2</accession>
<accession>P36574</accession>
<accession>Q9CHM6</accession>
<evidence type="ECO:0000250" key="1"/>
<evidence type="ECO:0000305" key="2"/>
<reference key="1">
    <citation type="journal article" date="2001" name="Genome Res.">
        <title>The complete genome sequence of the lactic acid bacterium Lactococcus lactis ssp. lactis IL1403.</title>
        <authorList>
            <person name="Bolotin A."/>
            <person name="Wincker P."/>
            <person name="Mauger S."/>
            <person name="Jaillon O."/>
            <person name="Malarme K."/>
            <person name="Weissenbach J."/>
            <person name="Ehrlich S.D."/>
            <person name="Sorokin A."/>
        </authorList>
    </citation>
    <scope>NUCLEOTIDE SEQUENCE [LARGE SCALE GENOMIC DNA]</scope>
    <source>
        <strain>IL1403</strain>
    </source>
</reference>
<protein>
    <recommendedName>
        <fullName>Di-/tripeptide transporter</fullName>
    </recommendedName>
</protein>
<proteinExistence type="inferred from homology"/>
<gene>
    <name type="primary">dtpT</name>
    <name type="ordered locus">LL0702</name>
    <name type="ORF">L104437</name>
</gene>
<comment type="function">
    <text>Proton-dependent uptake of di- or tri-peptides.</text>
</comment>
<comment type="subcellular location">
    <subcellularLocation>
        <location>Cell membrane</location>
        <topology>Multi-pass membrane protein</topology>
    </subcellularLocation>
</comment>
<comment type="similarity">
    <text evidence="2">Belongs to the major facilitator superfamily. Proton-dependent oligopeptide transporter (POT/PTR) (TC 2.A.17) family.</text>
</comment>